<sequence>MIDILNLTYDELEAWMTGTLGEPRFRARQVWQWLWQKNARSFDAMTNVSKATRARLAEAARITWPEVRTVKTSSDGTVKFLLALADGALVETVLIPSESREGKVRMTQCLSCQVGCAMGCTFCSTGSMGFERNMTMAEILGQVLVAREHLGDDRPDHPIVRNLVFMGMGEPLLNLNEVMRSLRTLNDEFGLCFSPRRITVSTCGIEKGLRELGESGLAFLAVSLHAPNQEVRARIMPRAARWTLDDLMAALESYPLKTRERITFEYLLLGGVNDSIDHARELVRLVSRTKAKLNLIVYNPAEGLPYEAPSQARILAFEQYLWSKNVTAIIRKSKGQDIKAACGQLKASELAELAGMAVTEEPKKEAE</sequence>
<name>RLMN_NITV9</name>
<gene>
    <name evidence="1" type="primary">rlmN</name>
    <name type="ordered locus">DvMF_1431</name>
</gene>
<keyword id="KW-0004">4Fe-4S</keyword>
<keyword id="KW-0963">Cytoplasm</keyword>
<keyword id="KW-1015">Disulfide bond</keyword>
<keyword id="KW-0408">Iron</keyword>
<keyword id="KW-0411">Iron-sulfur</keyword>
<keyword id="KW-0479">Metal-binding</keyword>
<keyword id="KW-0489">Methyltransferase</keyword>
<keyword id="KW-0698">rRNA processing</keyword>
<keyword id="KW-0949">S-adenosyl-L-methionine</keyword>
<keyword id="KW-0808">Transferase</keyword>
<keyword id="KW-0819">tRNA processing</keyword>
<dbReference type="EC" id="2.1.1.192" evidence="1"/>
<dbReference type="EMBL" id="CP001197">
    <property type="protein sequence ID" value="ACL08379.1"/>
    <property type="molecule type" value="Genomic_DNA"/>
</dbReference>
<dbReference type="SMR" id="B8DRU2"/>
<dbReference type="STRING" id="883.DvMF_1431"/>
<dbReference type="KEGG" id="dvm:DvMF_1431"/>
<dbReference type="eggNOG" id="COG0820">
    <property type="taxonomic scope" value="Bacteria"/>
</dbReference>
<dbReference type="HOGENOM" id="CLU_029101_2_0_7"/>
<dbReference type="OrthoDB" id="9793973at2"/>
<dbReference type="GO" id="GO:0005737">
    <property type="term" value="C:cytoplasm"/>
    <property type="evidence" value="ECO:0007669"/>
    <property type="project" value="UniProtKB-SubCell"/>
</dbReference>
<dbReference type="GO" id="GO:0051539">
    <property type="term" value="F:4 iron, 4 sulfur cluster binding"/>
    <property type="evidence" value="ECO:0007669"/>
    <property type="project" value="UniProtKB-UniRule"/>
</dbReference>
<dbReference type="GO" id="GO:0046872">
    <property type="term" value="F:metal ion binding"/>
    <property type="evidence" value="ECO:0007669"/>
    <property type="project" value="UniProtKB-KW"/>
</dbReference>
<dbReference type="GO" id="GO:0070040">
    <property type="term" value="F:rRNA (adenine(2503)-C2-)-methyltransferase activity"/>
    <property type="evidence" value="ECO:0007669"/>
    <property type="project" value="UniProtKB-UniRule"/>
</dbReference>
<dbReference type="GO" id="GO:0019843">
    <property type="term" value="F:rRNA binding"/>
    <property type="evidence" value="ECO:0007669"/>
    <property type="project" value="UniProtKB-UniRule"/>
</dbReference>
<dbReference type="GO" id="GO:0002935">
    <property type="term" value="F:tRNA (adenine(37)-C2)-methyltransferase activity"/>
    <property type="evidence" value="ECO:0007669"/>
    <property type="project" value="UniProtKB-UniRule"/>
</dbReference>
<dbReference type="GO" id="GO:0000049">
    <property type="term" value="F:tRNA binding"/>
    <property type="evidence" value="ECO:0007669"/>
    <property type="project" value="UniProtKB-UniRule"/>
</dbReference>
<dbReference type="GO" id="GO:0070475">
    <property type="term" value="P:rRNA base methylation"/>
    <property type="evidence" value="ECO:0007669"/>
    <property type="project" value="UniProtKB-UniRule"/>
</dbReference>
<dbReference type="GO" id="GO:0030488">
    <property type="term" value="P:tRNA methylation"/>
    <property type="evidence" value="ECO:0007669"/>
    <property type="project" value="UniProtKB-UniRule"/>
</dbReference>
<dbReference type="CDD" id="cd01335">
    <property type="entry name" value="Radical_SAM"/>
    <property type="match status" value="1"/>
</dbReference>
<dbReference type="FunFam" id="3.20.20.70:FF:000014">
    <property type="entry name" value="Probable dual-specificity RNA methyltransferase RlmN"/>
    <property type="match status" value="1"/>
</dbReference>
<dbReference type="Gene3D" id="1.10.150.530">
    <property type="match status" value="1"/>
</dbReference>
<dbReference type="Gene3D" id="3.20.20.70">
    <property type="entry name" value="Aldolase class I"/>
    <property type="match status" value="1"/>
</dbReference>
<dbReference type="HAMAP" id="MF_01849">
    <property type="entry name" value="RNA_methyltr_RlmN"/>
    <property type="match status" value="1"/>
</dbReference>
<dbReference type="InterPro" id="IPR013785">
    <property type="entry name" value="Aldolase_TIM"/>
</dbReference>
<dbReference type="InterPro" id="IPR040072">
    <property type="entry name" value="Methyltransferase_A"/>
</dbReference>
<dbReference type="InterPro" id="IPR048641">
    <property type="entry name" value="RlmN_N"/>
</dbReference>
<dbReference type="InterPro" id="IPR027492">
    <property type="entry name" value="RNA_MTrfase_RlmN"/>
</dbReference>
<dbReference type="InterPro" id="IPR004383">
    <property type="entry name" value="rRNA_lsu_MTrfase_RlmN/Cfr"/>
</dbReference>
<dbReference type="InterPro" id="IPR007197">
    <property type="entry name" value="rSAM"/>
</dbReference>
<dbReference type="NCBIfam" id="TIGR00048">
    <property type="entry name" value="rRNA_mod_RlmN"/>
    <property type="match status" value="1"/>
</dbReference>
<dbReference type="PANTHER" id="PTHR30544">
    <property type="entry name" value="23S RRNA METHYLTRANSFERASE"/>
    <property type="match status" value="1"/>
</dbReference>
<dbReference type="PANTHER" id="PTHR30544:SF5">
    <property type="entry name" value="RADICAL SAM CORE DOMAIN-CONTAINING PROTEIN"/>
    <property type="match status" value="1"/>
</dbReference>
<dbReference type="Pfam" id="PF04055">
    <property type="entry name" value="Radical_SAM"/>
    <property type="match status" value="1"/>
</dbReference>
<dbReference type="Pfam" id="PF21016">
    <property type="entry name" value="RlmN_N"/>
    <property type="match status" value="1"/>
</dbReference>
<dbReference type="PIRSF" id="PIRSF006004">
    <property type="entry name" value="CHP00048"/>
    <property type="match status" value="1"/>
</dbReference>
<dbReference type="SFLD" id="SFLDF00275">
    <property type="entry name" value="adenosine_C2_methyltransferase"/>
    <property type="match status" value="1"/>
</dbReference>
<dbReference type="SFLD" id="SFLDG01062">
    <property type="entry name" value="methyltransferase_(Class_A)"/>
    <property type="match status" value="1"/>
</dbReference>
<dbReference type="SUPFAM" id="SSF102114">
    <property type="entry name" value="Radical SAM enzymes"/>
    <property type="match status" value="1"/>
</dbReference>
<dbReference type="PROSITE" id="PS51918">
    <property type="entry name" value="RADICAL_SAM"/>
    <property type="match status" value="1"/>
</dbReference>
<proteinExistence type="inferred from homology"/>
<protein>
    <recommendedName>
        <fullName evidence="1">Dual-specificity RNA methyltransferase RlmN</fullName>
        <ecNumber evidence="1">2.1.1.192</ecNumber>
    </recommendedName>
    <alternativeName>
        <fullName evidence="1">23S rRNA (adenine(2503)-C(2))-methyltransferase</fullName>
    </alternativeName>
    <alternativeName>
        <fullName evidence="1">23S rRNA m2A2503 methyltransferase</fullName>
    </alternativeName>
    <alternativeName>
        <fullName evidence="1">Ribosomal RNA large subunit methyltransferase N</fullName>
    </alternativeName>
    <alternativeName>
        <fullName evidence="1">tRNA (adenine(37)-C(2))-methyltransferase</fullName>
    </alternativeName>
    <alternativeName>
        <fullName evidence="1">tRNA m2A37 methyltransferase</fullName>
    </alternativeName>
</protein>
<comment type="function">
    <text evidence="1">Specifically methylates position 2 of adenine 2503 in 23S rRNA and position 2 of adenine 37 in tRNAs. m2A2503 modification seems to play a crucial role in the proofreading step occurring at the peptidyl transferase center and thus would serve to optimize ribosomal fidelity.</text>
</comment>
<comment type="catalytic activity">
    <reaction evidence="1">
        <text>adenosine(2503) in 23S rRNA + 2 reduced [2Fe-2S]-[ferredoxin] + 2 S-adenosyl-L-methionine = 2-methyladenosine(2503) in 23S rRNA + 5'-deoxyadenosine + L-methionine + 2 oxidized [2Fe-2S]-[ferredoxin] + S-adenosyl-L-homocysteine</text>
        <dbReference type="Rhea" id="RHEA:42916"/>
        <dbReference type="Rhea" id="RHEA-COMP:10000"/>
        <dbReference type="Rhea" id="RHEA-COMP:10001"/>
        <dbReference type="Rhea" id="RHEA-COMP:10152"/>
        <dbReference type="Rhea" id="RHEA-COMP:10282"/>
        <dbReference type="ChEBI" id="CHEBI:17319"/>
        <dbReference type="ChEBI" id="CHEBI:33737"/>
        <dbReference type="ChEBI" id="CHEBI:33738"/>
        <dbReference type="ChEBI" id="CHEBI:57844"/>
        <dbReference type="ChEBI" id="CHEBI:57856"/>
        <dbReference type="ChEBI" id="CHEBI:59789"/>
        <dbReference type="ChEBI" id="CHEBI:74411"/>
        <dbReference type="ChEBI" id="CHEBI:74497"/>
        <dbReference type="EC" id="2.1.1.192"/>
    </reaction>
</comment>
<comment type="catalytic activity">
    <reaction evidence="1">
        <text>adenosine(37) in tRNA + 2 reduced [2Fe-2S]-[ferredoxin] + 2 S-adenosyl-L-methionine = 2-methyladenosine(37) in tRNA + 5'-deoxyadenosine + L-methionine + 2 oxidized [2Fe-2S]-[ferredoxin] + S-adenosyl-L-homocysteine</text>
        <dbReference type="Rhea" id="RHEA:43332"/>
        <dbReference type="Rhea" id="RHEA-COMP:10000"/>
        <dbReference type="Rhea" id="RHEA-COMP:10001"/>
        <dbReference type="Rhea" id="RHEA-COMP:10162"/>
        <dbReference type="Rhea" id="RHEA-COMP:10485"/>
        <dbReference type="ChEBI" id="CHEBI:17319"/>
        <dbReference type="ChEBI" id="CHEBI:33737"/>
        <dbReference type="ChEBI" id="CHEBI:33738"/>
        <dbReference type="ChEBI" id="CHEBI:57844"/>
        <dbReference type="ChEBI" id="CHEBI:57856"/>
        <dbReference type="ChEBI" id="CHEBI:59789"/>
        <dbReference type="ChEBI" id="CHEBI:74411"/>
        <dbReference type="ChEBI" id="CHEBI:74497"/>
        <dbReference type="EC" id="2.1.1.192"/>
    </reaction>
</comment>
<comment type="cofactor">
    <cofactor evidence="1">
        <name>[4Fe-4S] cluster</name>
        <dbReference type="ChEBI" id="CHEBI:49883"/>
    </cofactor>
    <text evidence="1">Binds 1 [4Fe-4S] cluster. The cluster is coordinated with 3 cysteines and an exchangeable S-adenosyl-L-methionine.</text>
</comment>
<comment type="subcellular location">
    <subcellularLocation>
        <location evidence="1">Cytoplasm</location>
    </subcellularLocation>
</comment>
<comment type="miscellaneous">
    <text evidence="1">Reaction proceeds by a ping-pong mechanism involving intermediate methylation of a conserved cysteine residue.</text>
</comment>
<comment type="similarity">
    <text evidence="1">Belongs to the radical SAM superfamily. RlmN family.</text>
</comment>
<organism>
    <name type="scientific">Nitratidesulfovibrio vulgaris (strain DSM 19637 / Miyazaki F)</name>
    <name type="common">Desulfovibrio vulgaris</name>
    <dbReference type="NCBI Taxonomy" id="883"/>
    <lineage>
        <taxon>Bacteria</taxon>
        <taxon>Pseudomonadati</taxon>
        <taxon>Thermodesulfobacteriota</taxon>
        <taxon>Desulfovibrionia</taxon>
        <taxon>Desulfovibrionales</taxon>
        <taxon>Desulfovibrionaceae</taxon>
        <taxon>Nitratidesulfovibrio</taxon>
    </lineage>
</organism>
<feature type="chain" id="PRO_1000188565" description="Dual-specificity RNA methyltransferase RlmN">
    <location>
        <begin position="1"/>
        <end position="367"/>
    </location>
</feature>
<feature type="domain" description="Radical SAM core" evidence="2">
    <location>
        <begin position="102"/>
        <end position="337"/>
    </location>
</feature>
<feature type="active site" description="Proton acceptor" evidence="1">
    <location>
        <position position="91"/>
    </location>
</feature>
<feature type="active site" description="S-methylcysteine intermediate" evidence="1">
    <location>
        <position position="342"/>
    </location>
</feature>
<feature type="binding site" evidence="1">
    <location>
        <position position="116"/>
    </location>
    <ligand>
        <name>[4Fe-4S] cluster</name>
        <dbReference type="ChEBI" id="CHEBI:49883"/>
        <note>4Fe-4S-S-AdoMet</note>
    </ligand>
</feature>
<feature type="binding site" evidence="1">
    <location>
        <position position="120"/>
    </location>
    <ligand>
        <name>[4Fe-4S] cluster</name>
        <dbReference type="ChEBI" id="CHEBI:49883"/>
        <note>4Fe-4S-S-AdoMet</note>
    </ligand>
</feature>
<feature type="binding site" evidence="1">
    <location>
        <position position="123"/>
    </location>
    <ligand>
        <name>[4Fe-4S] cluster</name>
        <dbReference type="ChEBI" id="CHEBI:49883"/>
        <note>4Fe-4S-S-AdoMet</note>
    </ligand>
</feature>
<feature type="binding site" evidence="1">
    <location>
        <begin position="169"/>
        <end position="170"/>
    </location>
    <ligand>
        <name>S-adenosyl-L-methionine</name>
        <dbReference type="ChEBI" id="CHEBI:59789"/>
    </ligand>
</feature>
<feature type="binding site" evidence="1">
    <location>
        <position position="201"/>
    </location>
    <ligand>
        <name>S-adenosyl-L-methionine</name>
        <dbReference type="ChEBI" id="CHEBI:59789"/>
    </ligand>
</feature>
<feature type="binding site" evidence="1">
    <location>
        <begin position="223"/>
        <end position="225"/>
    </location>
    <ligand>
        <name>S-adenosyl-L-methionine</name>
        <dbReference type="ChEBI" id="CHEBI:59789"/>
    </ligand>
</feature>
<feature type="binding site" evidence="1">
    <location>
        <position position="299"/>
    </location>
    <ligand>
        <name>S-adenosyl-L-methionine</name>
        <dbReference type="ChEBI" id="CHEBI:59789"/>
    </ligand>
</feature>
<feature type="disulfide bond" description="(transient)" evidence="1">
    <location>
        <begin position="109"/>
        <end position="342"/>
    </location>
</feature>
<reference key="1">
    <citation type="submission" date="2008-10" db="EMBL/GenBank/DDBJ databases">
        <title>Complete sequence of Desulfovibrio vulgaris str. 'Miyazaki F'.</title>
        <authorList>
            <person name="Lucas S."/>
            <person name="Copeland A."/>
            <person name="Lapidus A."/>
            <person name="Glavina del Rio T."/>
            <person name="Dalin E."/>
            <person name="Tice H."/>
            <person name="Bruce D."/>
            <person name="Goodwin L."/>
            <person name="Pitluck S."/>
            <person name="Sims D."/>
            <person name="Brettin T."/>
            <person name="Detter J.C."/>
            <person name="Han C."/>
            <person name="Larimer F."/>
            <person name="Land M."/>
            <person name="Hauser L."/>
            <person name="Kyrpides N."/>
            <person name="Mikhailova N."/>
            <person name="Hazen T.C."/>
            <person name="Richardson P."/>
        </authorList>
    </citation>
    <scope>NUCLEOTIDE SEQUENCE [LARGE SCALE GENOMIC DNA]</scope>
    <source>
        <strain>DSM 19637 / Miyazaki F</strain>
    </source>
</reference>
<evidence type="ECO:0000255" key="1">
    <source>
        <dbReference type="HAMAP-Rule" id="MF_01849"/>
    </source>
</evidence>
<evidence type="ECO:0000255" key="2">
    <source>
        <dbReference type="PROSITE-ProRule" id="PRU01266"/>
    </source>
</evidence>
<accession>B8DRU2</accession>